<organism>
    <name type="scientific">Staphylococcus aureus (strain N315)</name>
    <dbReference type="NCBI Taxonomy" id="158879"/>
    <lineage>
        <taxon>Bacteria</taxon>
        <taxon>Bacillati</taxon>
        <taxon>Bacillota</taxon>
        <taxon>Bacilli</taxon>
        <taxon>Bacillales</taxon>
        <taxon>Staphylococcaceae</taxon>
        <taxon>Staphylococcus</taxon>
    </lineage>
</organism>
<reference key="1">
    <citation type="journal article" date="2001" name="Lancet">
        <title>Whole genome sequencing of meticillin-resistant Staphylococcus aureus.</title>
        <authorList>
            <person name="Kuroda M."/>
            <person name="Ohta T."/>
            <person name="Uchiyama I."/>
            <person name="Baba T."/>
            <person name="Yuzawa H."/>
            <person name="Kobayashi I."/>
            <person name="Cui L."/>
            <person name="Oguchi A."/>
            <person name="Aoki K."/>
            <person name="Nagai Y."/>
            <person name="Lian J.-Q."/>
            <person name="Ito T."/>
            <person name="Kanamori M."/>
            <person name="Matsumaru H."/>
            <person name="Maruyama A."/>
            <person name="Murakami H."/>
            <person name="Hosoyama A."/>
            <person name="Mizutani-Ui Y."/>
            <person name="Takahashi N.K."/>
            <person name="Sawano T."/>
            <person name="Inoue R."/>
            <person name="Kaito C."/>
            <person name="Sekimizu K."/>
            <person name="Hirakawa H."/>
            <person name="Kuhara S."/>
            <person name="Goto S."/>
            <person name="Yabuzaki J."/>
            <person name="Kanehisa M."/>
            <person name="Yamashita A."/>
            <person name="Oshima K."/>
            <person name="Furuya K."/>
            <person name="Yoshino C."/>
            <person name="Shiba T."/>
            <person name="Hattori M."/>
            <person name="Ogasawara N."/>
            <person name="Hayashi H."/>
            <person name="Hiramatsu K."/>
        </authorList>
    </citation>
    <scope>NUCLEOTIDE SEQUENCE [LARGE SCALE GENOMIC DNA]</scope>
    <source>
        <strain>N315</strain>
    </source>
</reference>
<dbReference type="EC" id="3.1.3.48"/>
<dbReference type="EMBL" id="BA000018">
    <property type="protein sequence ID" value="BAB43201.1"/>
    <property type="molecule type" value="Genomic_DNA"/>
</dbReference>
<dbReference type="PIR" id="H90004">
    <property type="entry name" value="H90004"/>
</dbReference>
<dbReference type="RefSeq" id="WP_000697334.1">
    <property type="nucleotide sequence ID" value="NC_002745.2"/>
</dbReference>
<dbReference type="SMR" id="Q7A4E1"/>
<dbReference type="EnsemblBacteria" id="BAB43201">
    <property type="protein sequence ID" value="BAB43201"/>
    <property type="gene ID" value="BAB43201"/>
</dbReference>
<dbReference type="KEGG" id="sau:SA1917"/>
<dbReference type="HOGENOM" id="CLU_071415_1_2_9"/>
<dbReference type="GO" id="GO:0004725">
    <property type="term" value="F:protein tyrosine phosphatase activity"/>
    <property type="evidence" value="ECO:0007669"/>
    <property type="project" value="UniProtKB-EC"/>
</dbReference>
<dbReference type="CDD" id="cd16344">
    <property type="entry name" value="LMWPAP"/>
    <property type="match status" value="1"/>
</dbReference>
<dbReference type="Gene3D" id="3.40.50.2300">
    <property type="match status" value="1"/>
</dbReference>
<dbReference type="InterPro" id="IPR050438">
    <property type="entry name" value="LMW_PTPase"/>
</dbReference>
<dbReference type="InterPro" id="IPR023485">
    <property type="entry name" value="Ptyr_pPase"/>
</dbReference>
<dbReference type="InterPro" id="IPR036196">
    <property type="entry name" value="Ptyr_pPase_sf"/>
</dbReference>
<dbReference type="InterPro" id="IPR017867">
    <property type="entry name" value="Tyr_phospatase_low_mol_wt"/>
</dbReference>
<dbReference type="PANTHER" id="PTHR11717">
    <property type="entry name" value="LOW MOLECULAR WEIGHT PROTEIN TYROSINE PHOSPHATASE"/>
    <property type="match status" value="1"/>
</dbReference>
<dbReference type="PANTHER" id="PTHR11717:SF31">
    <property type="entry name" value="LOW MOLECULAR WEIGHT PROTEIN-TYROSINE-PHOSPHATASE ETP-RELATED"/>
    <property type="match status" value="1"/>
</dbReference>
<dbReference type="Pfam" id="PF01451">
    <property type="entry name" value="LMWPc"/>
    <property type="match status" value="1"/>
</dbReference>
<dbReference type="PRINTS" id="PR00719">
    <property type="entry name" value="LMWPTPASE"/>
</dbReference>
<dbReference type="SMART" id="SM00226">
    <property type="entry name" value="LMWPc"/>
    <property type="match status" value="1"/>
</dbReference>
<dbReference type="SUPFAM" id="SSF52788">
    <property type="entry name" value="Phosphotyrosine protein phosphatases I"/>
    <property type="match status" value="1"/>
</dbReference>
<accession>Q7A4E1</accession>
<evidence type="ECO:0000250" key="1"/>
<evidence type="ECO:0000250" key="2">
    <source>
        <dbReference type="UniProtKB" id="P11064"/>
    </source>
</evidence>
<evidence type="ECO:0000305" key="3"/>
<comment type="function">
    <text evidence="1">Dephosphorylates the phosphotyrosine-containing proteins.</text>
</comment>
<comment type="catalytic activity">
    <reaction>
        <text>O-phospho-L-tyrosyl-[protein] + H2O = L-tyrosyl-[protein] + phosphate</text>
        <dbReference type="Rhea" id="RHEA:10684"/>
        <dbReference type="Rhea" id="RHEA-COMP:10136"/>
        <dbReference type="Rhea" id="RHEA-COMP:20101"/>
        <dbReference type="ChEBI" id="CHEBI:15377"/>
        <dbReference type="ChEBI" id="CHEBI:43474"/>
        <dbReference type="ChEBI" id="CHEBI:46858"/>
        <dbReference type="ChEBI" id="CHEBI:61978"/>
        <dbReference type="EC" id="3.1.3.48"/>
    </reaction>
</comment>
<comment type="similarity">
    <text evidence="3">Belongs to the low molecular weight phosphotyrosine protein phosphatase family.</text>
</comment>
<gene>
    <name type="primary">ptpB</name>
    <name type="ordered locus">SA1917</name>
</gene>
<proteinExistence type="inferred from homology"/>
<keyword id="KW-0378">Hydrolase</keyword>
<keyword id="KW-0904">Protein phosphatase</keyword>
<name>PTPB_STAAN</name>
<sequence length="139" mass="15788">MKILFVCTGNTCRSPLAESIAKEVMPNHQFESRGIFAVNNQGVSNYVEDLVEEHHLAETTLSQQFTEADLKADIILTMSYSHKELIEAHFGLQNHVFTLHEYVKEAGEVIDPYGGTKEMYVHTYEELVSLILKLKDIIC</sequence>
<feature type="chain" id="PRO_0000300677" description="Low molecular weight protein-tyrosine-phosphatase PtpB">
    <location>
        <begin position="1"/>
        <end position="139"/>
    </location>
</feature>
<feature type="active site" description="Nucleophile" evidence="2">
    <location>
        <position position="7"/>
    </location>
</feature>
<feature type="active site" evidence="2">
    <location>
        <position position="13"/>
    </location>
</feature>
<feature type="active site" description="Proton donor" evidence="2">
    <location>
        <position position="111"/>
    </location>
</feature>
<protein>
    <recommendedName>
        <fullName>Low molecular weight protein-tyrosine-phosphatase PtpB</fullName>
        <ecNumber>3.1.3.48</ecNumber>
    </recommendedName>
    <alternativeName>
        <fullName>Phosphotyrosine phosphatase B</fullName>
        <shortName>PTPase B</shortName>
    </alternativeName>
</protein>